<organism>
    <name type="scientific">Bacillus subtilis (strain 168)</name>
    <dbReference type="NCBI Taxonomy" id="224308"/>
    <lineage>
        <taxon>Bacteria</taxon>
        <taxon>Bacillati</taxon>
        <taxon>Bacillota</taxon>
        <taxon>Bacilli</taxon>
        <taxon>Bacillales</taxon>
        <taxon>Bacillaceae</taxon>
        <taxon>Bacillus</taxon>
    </lineage>
</organism>
<feature type="chain" id="PRO_0000108188" description="Uncharacterized transporter YyaM">
    <location>
        <begin position="1"/>
        <end position="305"/>
    </location>
</feature>
<feature type="transmembrane region" description="Helical" evidence="1">
    <location>
        <begin position="4"/>
        <end position="24"/>
    </location>
</feature>
<feature type="transmembrane region" description="Helical" evidence="1">
    <location>
        <begin position="38"/>
        <end position="58"/>
    </location>
</feature>
<feature type="transmembrane region" description="Helical" evidence="1">
    <location>
        <begin position="67"/>
        <end position="87"/>
    </location>
</feature>
<feature type="transmembrane region" description="Helical" evidence="1">
    <location>
        <begin position="95"/>
        <end position="115"/>
    </location>
</feature>
<feature type="transmembrane region" description="Helical" evidence="1">
    <location>
        <begin position="125"/>
        <end position="145"/>
    </location>
</feature>
<feature type="transmembrane region" description="Helical" evidence="1">
    <location>
        <begin position="152"/>
        <end position="172"/>
    </location>
</feature>
<feature type="transmembrane region" description="Helical" evidence="1">
    <location>
        <begin position="183"/>
        <end position="203"/>
    </location>
</feature>
<feature type="transmembrane region" description="Helical" evidence="1">
    <location>
        <begin position="215"/>
        <end position="235"/>
    </location>
</feature>
<feature type="transmembrane region" description="Helical" evidence="1">
    <location>
        <begin position="250"/>
        <end position="270"/>
    </location>
</feature>
<feature type="transmembrane region" description="Helical" evidence="1">
    <location>
        <begin position="272"/>
        <end position="292"/>
    </location>
</feature>
<feature type="domain" description="EamA 1">
    <location>
        <begin position="15"/>
        <end position="140"/>
    </location>
</feature>
<feature type="domain" description="EamA 2">
    <location>
        <begin position="164"/>
        <end position="290"/>
    </location>
</feature>
<name>YYAM_BACSU</name>
<gene>
    <name type="primary">yyaM</name>
    <name type="ordered locus">BSU40810</name>
</gene>
<evidence type="ECO:0000255" key="1"/>
<evidence type="ECO:0000305" key="2"/>
<sequence length="305" mass="32893">MKHLNIYIMLLGFSIFTGATFNLAKYTVGYFSPSSSAAWRFGLAAAVMLIILIFTEGIKKSQLRKNAVSYIVLGIIGIFGFNALFFVGLKYTSPVNGALIMGLNPLLTAILARIILKDNMTKKQVLGIFFAFIGVLLVITQGSIETIKTLSISGGDLIIFTGNVCWALYGVLGRRFVKDGTPLSTTTYTMVIGAVSLIVVSLFTSKPVSLSNIPIGVWGAIAFMAFFTSVLGYLWWNQGIKEIGASKTSLFFNLVPVVTMIISFAVGTPIKVFQVIGAVLVILGVLTASGVIRIPKYNTKEQSAI</sequence>
<dbReference type="EMBL" id="D26185">
    <property type="protein sequence ID" value="BAA05211.1"/>
    <property type="molecule type" value="Genomic_DNA"/>
</dbReference>
<dbReference type="EMBL" id="AL009126">
    <property type="protein sequence ID" value="CAB16118.1"/>
    <property type="molecule type" value="Genomic_DNA"/>
</dbReference>
<dbReference type="PIR" id="S66005">
    <property type="entry name" value="S66005"/>
</dbReference>
<dbReference type="RefSeq" id="NP_391961.1">
    <property type="nucleotide sequence ID" value="NC_000964.3"/>
</dbReference>
<dbReference type="RefSeq" id="WP_003242776.1">
    <property type="nucleotide sequence ID" value="NZ_OZ025638.1"/>
</dbReference>
<dbReference type="SMR" id="P37511"/>
<dbReference type="FunCoup" id="P37511">
    <property type="interactions" value="114"/>
</dbReference>
<dbReference type="STRING" id="224308.BSU40810"/>
<dbReference type="PaxDb" id="224308-BSU40810"/>
<dbReference type="EnsemblBacteria" id="CAB16118">
    <property type="protein sequence ID" value="CAB16118"/>
    <property type="gene ID" value="BSU_40810"/>
</dbReference>
<dbReference type="GeneID" id="937895"/>
<dbReference type="KEGG" id="bsu:BSU40810"/>
<dbReference type="PATRIC" id="fig|224308.179.peg.4422"/>
<dbReference type="eggNOG" id="COG0697">
    <property type="taxonomic scope" value="Bacteria"/>
</dbReference>
<dbReference type="InParanoid" id="P37511"/>
<dbReference type="OrthoDB" id="9805239at2"/>
<dbReference type="PhylomeDB" id="P37511"/>
<dbReference type="BioCyc" id="BSUB:BSU40810-MONOMER"/>
<dbReference type="Proteomes" id="UP000001570">
    <property type="component" value="Chromosome"/>
</dbReference>
<dbReference type="GO" id="GO:0005886">
    <property type="term" value="C:plasma membrane"/>
    <property type="evidence" value="ECO:0007669"/>
    <property type="project" value="UniProtKB-SubCell"/>
</dbReference>
<dbReference type="InterPro" id="IPR050638">
    <property type="entry name" value="AA-Vitamin_Transporters"/>
</dbReference>
<dbReference type="InterPro" id="IPR000620">
    <property type="entry name" value="EamA_dom"/>
</dbReference>
<dbReference type="PANTHER" id="PTHR32322:SF2">
    <property type="entry name" value="EAMA DOMAIN-CONTAINING PROTEIN"/>
    <property type="match status" value="1"/>
</dbReference>
<dbReference type="PANTHER" id="PTHR32322">
    <property type="entry name" value="INNER MEMBRANE TRANSPORTER"/>
    <property type="match status" value="1"/>
</dbReference>
<dbReference type="Pfam" id="PF00892">
    <property type="entry name" value="EamA"/>
    <property type="match status" value="2"/>
</dbReference>
<dbReference type="SUPFAM" id="SSF103481">
    <property type="entry name" value="Multidrug resistance efflux transporter EmrE"/>
    <property type="match status" value="2"/>
</dbReference>
<protein>
    <recommendedName>
        <fullName>Uncharacterized transporter YyaM</fullName>
    </recommendedName>
</protein>
<accession>P37511</accession>
<keyword id="KW-1003">Cell membrane</keyword>
<keyword id="KW-0472">Membrane</keyword>
<keyword id="KW-1185">Reference proteome</keyword>
<keyword id="KW-0677">Repeat</keyword>
<keyword id="KW-0812">Transmembrane</keyword>
<keyword id="KW-1133">Transmembrane helix</keyword>
<keyword id="KW-0813">Transport</keyword>
<reference key="1">
    <citation type="journal article" date="1994" name="DNA Res.">
        <title>Systematic sequencing of the 180 kilobase region of the Bacillus subtilis chromosome containing the replication origin.</title>
        <authorList>
            <person name="Ogasawara N."/>
            <person name="Nakai S."/>
            <person name="Yoshikawa H."/>
        </authorList>
    </citation>
    <scope>NUCLEOTIDE SEQUENCE [GENOMIC DNA]</scope>
    <source>
        <strain>168</strain>
    </source>
</reference>
<reference key="2">
    <citation type="journal article" date="1997" name="Nature">
        <title>The complete genome sequence of the Gram-positive bacterium Bacillus subtilis.</title>
        <authorList>
            <person name="Kunst F."/>
            <person name="Ogasawara N."/>
            <person name="Moszer I."/>
            <person name="Albertini A.M."/>
            <person name="Alloni G."/>
            <person name="Azevedo V."/>
            <person name="Bertero M.G."/>
            <person name="Bessieres P."/>
            <person name="Bolotin A."/>
            <person name="Borchert S."/>
            <person name="Borriss R."/>
            <person name="Boursier L."/>
            <person name="Brans A."/>
            <person name="Braun M."/>
            <person name="Brignell S.C."/>
            <person name="Bron S."/>
            <person name="Brouillet S."/>
            <person name="Bruschi C.V."/>
            <person name="Caldwell B."/>
            <person name="Capuano V."/>
            <person name="Carter N.M."/>
            <person name="Choi S.-K."/>
            <person name="Codani J.-J."/>
            <person name="Connerton I.F."/>
            <person name="Cummings N.J."/>
            <person name="Daniel R.A."/>
            <person name="Denizot F."/>
            <person name="Devine K.M."/>
            <person name="Duesterhoeft A."/>
            <person name="Ehrlich S.D."/>
            <person name="Emmerson P.T."/>
            <person name="Entian K.-D."/>
            <person name="Errington J."/>
            <person name="Fabret C."/>
            <person name="Ferrari E."/>
            <person name="Foulger D."/>
            <person name="Fritz C."/>
            <person name="Fujita M."/>
            <person name="Fujita Y."/>
            <person name="Fuma S."/>
            <person name="Galizzi A."/>
            <person name="Galleron N."/>
            <person name="Ghim S.-Y."/>
            <person name="Glaser P."/>
            <person name="Goffeau A."/>
            <person name="Golightly E.J."/>
            <person name="Grandi G."/>
            <person name="Guiseppi G."/>
            <person name="Guy B.J."/>
            <person name="Haga K."/>
            <person name="Haiech J."/>
            <person name="Harwood C.R."/>
            <person name="Henaut A."/>
            <person name="Hilbert H."/>
            <person name="Holsappel S."/>
            <person name="Hosono S."/>
            <person name="Hullo M.-F."/>
            <person name="Itaya M."/>
            <person name="Jones L.-M."/>
            <person name="Joris B."/>
            <person name="Karamata D."/>
            <person name="Kasahara Y."/>
            <person name="Klaerr-Blanchard M."/>
            <person name="Klein C."/>
            <person name="Kobayashi Y."/>
            <person name="Koetter P."/>
            <person name="Koningstein G."/>
            <person name="Krogh S."/>
            <person name="Kumano M."/>
            <person name="Kurita K."/>
            <person name="Lapidus A."/>
            <person name="Lardinois S."/>
            <person name="Lauber J."/>
            <person name="Lazarevic V."/>
            <person name="Lee S.-M."/>
            <person name="Levine A."/>
            <person name="Liu H."/>
            <person name="Masuda S."/>
            <person name="Mauel C."/>
            <person name="Medigue C."/>
            <person name="Medina N."/>
            <person name="Mellado R.P."/>
            <person name="Mizuno M."/>
            <person name="Moestl D."/>
            <person name="Nakai S."/>
            <person name="Noback M."/>
            <person name="Noone D."/>
            <person name="O'Reilly M."/>
            <person name="Ogawa K."/>
            <person name="Ogiwara A."/>
            <person name="Oudega B."/>
            <person name="Park S.-H."/>
            <person name="Parro V."/>
            <person name="Pohl T.M."/>
            <person name="Portetelle D."/>
            <person name="Porwollik S."/>
            <person name="Prescott A.M."/>
            <person name="Presecan E."/>
            <person name="Pujic P."/>
            <person name="Purnelle B."/>
            <person name="Rapoport G."/>
            <person name="Rey M."/>
            <person name="Reynolds S."/>
            <person name="Rieger M."/>
            <person name="Rivolta C."/>
            <person name="Rocha E."/>
            <person name="Roche B."/>
            <person name="Rose M."/>
            <person name="Sadaie Y."/>
            <person name="Sato T."/>
            <person name="Scanlan E."/>
            <person name="Schleich S."/>
            <person name="Schroeter R."/>
            <person name="Scoffone F."/>
            <person name="Sekiguchi J."/>
            <person name="Sekowska A."/>
            <person name="Seror S.J."/>
            <person name="Serror P."/>
            <person name="Shin B.-S."/>
            <person name="Soldo B."/>
            <person name="Sorokin A."/>
            <person name="Tacconi E."/>
            <person name="Takagi T."/>
            <person name="Takahashi H."/>
            <person name="Takemaru K."/>
            <person name="Takeuchi M."/>
            <person name="Tamakoshi A."/>
            <person name="Tanaka T."/>
            <person name="Terpstra P."/>
            <person name="Tognoni A."/>
            <person name="Tosato V."/>
            <person name="Uchiyama S."/>
            <person name="Vandenbol M."/>
            <person name="Vannier F."/>
            <person name="Vassarotti A."/>
            <person name="Viari A."/>
            <person name="Wambutt R."/>
            <person name="Wedler E."/>
            <person name="Wedler H."/>
            <person name="Weitzenegger T."/>
            <person name="Winters P."/>
            <person name="Wipat A."/>
            <person name="Yamamoto H."/>
            <person name="Yamane K."/>
            <person name="Yasumoto K."/>
            <person name="Yata K."/>
            <person name="Yoshida K."/>
            <person name="Yoshikawa H.-F."/>
            <person name="Zumstein E."/>
            <person name="Yoshikawa H."/>
            <person name="Danchin A."/>
        </authorList>
    </citation>
    <scope>NUCLEOTIDE SEQUENCE [LARGE SCALE GENOMIC DNA]</scope>
    <source>
        <strain>168</strain>
    </source>
</reference>
<proteinExistence type="inferred from homology"/>
<comment type="subcellular location">
    <subcellularLocation>
        <location evidence="2">Cell membrane</location>
        <topology evidence="2">Multi-pass membrane protein</topology>
    </subcellularLocation>
</comment>
<comment type="similarity">
    <text evidence="2">Belongs to the EamA transporter family.</text>
</comment>